<protein>
    <recommendedName>
        <fullName>Mitogen-activated protein kinase kinase kinase 9</fullName>
        <ecNumber>2.7.11.25</ecNumber>
    </recommendedName>
    <alternativeName>
        <fullName>Mixed lineage kinase 1</fullName>
    </alternativeName>
</protein>
<name>M3K9_HUMAN</name>
<keyword id="KW-0002">3D-structure</keyword>
<keyword id="KW-0025">Alternative splicing</keyword>
<keyword id="KW-0053">Apoptosis</keyword>
<keyword id="KW-0067">ATP-binding</keyword>
<keyword id="KW-0418">Kinase</keyword>
<keyword id="KW-0547">Nucleotide-binding</keyword>
<keyword id="KW-0597">Phosphoprotein</keyword>
<keyword id="KW-1267">Proteomics identification</keyword>
<keyword id="KW-1185">Reference proteome</keyword>
<keyword id="KW-0677">Repeat</keyword>
<keyword id="KW-0723">Serine/threonine-protein kinase</keyword>
<keyword id="KW-0728">SH3 domain</keyword>
<keyword id="KW-0346">Stress response</keyword>
<keyword id="KW-0804">Transcription</keyword>
<keyword id="KW-0805">Transcription regulation</keyword>
<keyword id="KW-0808">Transferase</keyword>
<organism>
    <name type="scientific">Homo sapiens</name>
    <name type="common">Human</name>
    <dbReference type="NCBI Taxonomy" id="9606"/>
    <lineage>
        <taxon>Eukaryota</taxon>
        <taxon>Metazoa</taxon>
        <taxon>Chordata</taxon>
        <taxon>Craniata</taxon>
        <taxon>Vertebrata</taxon>
        <taxon>Euteleostomi</taxon>
        <taxon>Mammalia</taxon>
        <taxon>Eutheria</taxon>
        <taxon>Euarchontoglires</taxon>
        <taxon>Primates</taxon>
        <taxon>Haplorrhini</taxon>
        <taxon>Catarrhini</taxon>
        <taxon>Hominidae</taxon>
        <taxon>Homo</taxon>
    </lineage>
</organism>
<gene>
    <name type="primary">MAP3K9</name>
    <name type="synonym">MLK1</name>
    <name type="synonym">PRKE1</name>
</gene>
<dbReference type="EC" id="2.7.11.25"/>
<dbReference type="EMBL" id="AY327900">
    <property type="protein sequence ID" value="AAQ23054.1"/>
    <property type="molecule type" value="mRNA"/>
</dbReference>
<dbReference type="EMBL" id="BC111407">
    <property type="protein sequence ID" value="AAI11408.1"/>
    <property type="status" value="ALT_INIT"/>
    <property type="molecule type" value="mRNA"/>
</dbReference>
<dbReference type="EMBL" id="BC133706">
    <property type="protein sequence ID" value="AAI33707.1"/>
    <property type="molecule type" value="mRNA"/>
</dbReference>
<dbReference type="EMBL" id="AF251442">
    <property type="protein sequence ID" value="AAG44591.1"/>
    <property type="molecule type" value="mRNA"/>
</dbReference>
<dbReference type="CCDS" id="CCDS32112.1">
    <molecule id="P80192-4"/>
</dbReference>
<dbReference type="CCDS" id="CCDS61488.1">
    <molecule id="P80192-1"/>
</dbReference>
<dbReference type="PIR" id="S32467">
    <property type="entry name" value="JU0229"/>
</dbReference>
<dbReference type="RefSeq" id="NP_001271159.1">
    <molecule id="P80192-1"/>
    <property type="nucleotide sequence ID" value="NM_001284230.2"/>
</dbReference>
<dbReference type="RefSeq" id="NP_149132.2">
    <molecule id="P80192-4"/>
    <property type="nucleotide sequence ID" value="NM_033141.3"/>
</dbReference>
<dbReference type="PDB" id="3DTC">
    <property type="method" value="X-ray"/>
    <property type="resolution" value="2.60 A"/>
    <property type="chains" value="A=136-406"/>
</dbReference>
<dbReference type="PDB" id="4UY9">
    <property type="method" value="X-ray"/>
    <property type="resolution" value="2.81 A"/>
    <property type="chains" value="A/B=135-456"/>
</dbReference>
<dbReference type="PDBsum" id="3DTC"/>
<dbReference type="PDBsum" id="4UY9"/>
<dbReference type="SMR" id="P80192"/>
<dbReference type="BioGRID" id="110439">
    <property type="interactions" value="28"/>
</dbReference>
<dbReference type="FunCoup" id="P80192">
    <property type="interactions" value="485"/>
</dbReference>
<dbReference type="IntAct" id="P80192">
    <property type="interactions" value="31"/>
</dbReference>
<dbReference type="STRING" id="9606.ENSP00000451263"/>
<dbReference type="BindingDB" id="P80192"/>
<dbReference type="ChEMBL" id="CHEMBL2872"/>
<dbReference type="DrugBank" id="DB08703">
    <property type="generic name" value="12-(2-hydroxyethyl)-2-(1-methylethoxy)-13,14-dihydronaphtho[2,1-a]pyrrolo[3,4-c]carbazol-5(12H)-one"/>
</dbReference>
<dbReference type="DrugBank" id="DB12010">
    <property type="generic name" value="Fostamatinib"/>
</dbReference>
<dbReference type="DrugCentral" id="P80192"/>
<dbReference type="GuidetoPHARMACOLOGY" id="2084"/>
<dbReference type="GlyGen" id="P80192">
    <property type="glycosylation" value="2 sites, 1 O-linked glycan (1 site)"/>
</dbReference>
<dbReference type="iPTMnet" id="P80192"/>
<dbReference type="PhosphoSitePlus" id="P80192"/>
<dbReference type="BioMuta" id="MAP3K9"/>
<dbReference type="DMDM" id="116242625"/>
<dbReference type="CPTAC" id="CPTAC-860"/>
<dbReference type="CPTAC" id="CPTAC-861"/>
<dbReference type="jPOST" id="P80192"/>
<dbReference type="MassIVE" id="P80192"/>
<dbReference type="PaxDb" id="9606-ENSP00000451263"/>
<dbReference type="PeptideAtlas" id="P80192"/>
<dbReference type="ProteomicsDB" id="57671">
    <molecule id="P80192-1"/>
</dbReference>
<dbReference type="ProteomicsDB" id="57672">
    <molecule id="P80192-4"/>
</dbReference>
<dbReference type="Antibodypedia" id="75">
    <property type="antibodies" value="343 antibodies from 33 providers"/>
</dbReference>
<dbReference type="DNASU" id="4293"/>
<dbReference type="Ensembl" id="ENST00000554752.7">
    <molecule id="P80192-1"/>
    <property type="protein sequence ID" value="ENSP00000451612.2"/>
    <property type="gene ID" value="ENSG00000006432.16"/>
</dbReference>
<dbReference type="Ensembl" id="ENST00000555993.6">
    <molecule id="P80192-4"/>
    <property type="protein sequence ID" value="ENSP00000451263.2"/>
    <property type="gene ID" value="ENSG00000006432.16"/>
</dbReference>
<dbReference type="GeneID" id="4293"/>
<dbReference type="KEGG" id="hsa:4293"/>
<dbReference type="MANE-Select" id="ENST00000554752.7">
    <property type="protein sequence ID" value="ENSP00000451612.2"/>
    <property type="RefSeq nucleotide sequence ID" value="NM_001284230.2"/>
    <property type="RefSeq protein sequence ID" value="NP_001271159.1"/>
</dbReference>
<dbReference type="UCSC" id="uc001xml.5">
    <molecule id="P80192-1"/>
    <property type="organism name" value="human"/>
</dbReference>
<dbReference type="AGR" id="HGNC:6861"/>
<dbReference type="CTD" id="4293"/>
<dbReference type="DisGeNET" id="4293"/>
<dbReference type="GeneCards" id="MAP3K9"/>
<dbReference type="HGNC" id="HGNC:6861">
    <property type="gene designation" value="MAP3K9"/>
</dbReference>
<dbReference type="HPA" id="ENSG00000006432">
    <property type="expression patterns" value="Tissue enhanced (retina)"/>
</dbReference>
<dbReference type="MIM" id="600136">
    <property type="type" value="gene"/>
</dbReference>
<dbReference type="neXtProt" id="NX_P80192"/>
<dbReference type="OpenTargets" id="ENSG00000006432"/>
<dbReference type="PharmGKB" id="PA30607"/>
<dbReference type="VEuPathDB" id="HostDB:ENSG00000006432"/>
<dbReference type="eggNOG" id="KOG0192">
    <property type="taxonomic scope" value="Eukaryota"/>
</dbReference>
<dbReference type="GeneTree" id="ENSGT00940000158243"/>
<dbReference type="InParanoid" id="P80192"/>
<dbReference type="OMA" id="GCGPYRE"/>
<dbReference type="OrthoDB" id="339325at2759"/>
<dbReference type="PAN-GO" id="P80192">
    <property type="GO annotations" value="1 GO annotation based on evolutionary models"/>
</dbReference>
<dbReference type="PhylomeDB" id="P80192"/>
<dbReference type="TreeFam" id="TF105118"/>
<dbReference type="PathwayCommons" id="P80192"/>
<dbReference type="SABIO-RK" id="P80192"/>
<dbReference type="SignaLink" id="P80192"/>
<dbReference type="SIGNOR" id="P80192"/>
<dbReference type="BioGRID-ORCS" id="4293">
    <property type="hits" value="8 hits in 1178 CRISPR screens"/>
</dbReference>
<dbReference type="ChiTaRS" id="MAP3K9">
    <property type="organism name" value="human"/>
</dbReference>
<dbReference type="EvolutionaryTrace" id="P80192"/>
<dbReference type="GeneWiki" id="MAP3K9"/>
<dbReference type="GenomeRNAi" id="4293"/>
<dbReference type="Pharos" id="P80192">
    <property type="development level" value="Tchem"/>
</dbReference>
<dbReference type="PRO" id="PR:P80192"/>
<dbReference type="Proteomes" id="UP000005640">
    <property type="component" value="Chromosome 14"/>
</dbReference>
<dbReference type="RNAct" id="P80192">
    <property type="molecule type" value="protein"/>
</dbReference>
<dbReference type="Bgee" id="ENSG00000006432">
    <property type="expression patterns" value="Expressed in buccal mucosa cell and 161 other cell types or tissues"/>
</dbReference>
<dbReference type="ExpressionAtlas" id="P80192">
    <property type="expression patterns" value="baseline and differential"/>
</dbReference>
<dbReference type="GO" id="GO:0005737">
    <property type="term" value="C:cytoplasm"/>
    <property type="evidence" value="ECO:0000318"/>
    <property type="project" value="GO_Central"/>
</dbReference>
<dbReference type="GO" id="GO:0005524">
    <property type="term" value="F:ATP binding"/>
    <property type="evidence" value="ECO:0007669"/>
    <property type="project" value="UniProtKB-KW"/>
</dbReference>
<dbReference type="GO" id="GO:0004706">
    <property type="term" value="F:JUN kinase kinase kinase activity"/>
    <property type="evidence" value="ECO:0000250"/>
    <property type="project" value="UniProtKB"/>
</dbReference>
<dbReference type="GO" id="GO:0004708">
    <property type="term" value="F:MAP kinase kinase activity"/>
    <property type="evidence" value="ECO:0000303"/>
    <property type="project" value="UniProtKB"/>
</dbReference>
<dbReference type="GO" id="GO:0140677">
    <property type="term" value="F:molecular function activator activity"/>
    <property type="evidence" value="ECO:0000269"/>
    <property type="project" value="DisProt"/>
</dbReference>
<dbReference type="GO" id="GO:0042803">
    <property type="term" value="F:protein homodimerization activity"/>
    <property type="evidence" value="ECO:0000250"/>
    <property type="project" value="UniProtKB"/>
</dbReference>
<dbReference type="GO" id="GO:0106310">
    <property type="term" value="F:protein serine kinase activity"/>
    <property type="evidence" value="ECO:0007669"/>
    <property type="project" value="RHEA"/>
</dbReference>
<dbReference type="GO" id="GO:0004674">
    <property type="term" value="F:protein serine/threonine kinase activity"/>
    <property type="evidence" value="ECO:0000314"/>
    <property type="project" value="UniProtKB"/>
</dbReference>
<dbReference type="GO" id="GO:0006915">
    <property type="term" value="P:apoptotic process"/>
    <property type="evidence" value="ECO:0007669"/>
    <property type="project" value="UniProtKB-KW"/>
</dbReference>
<dbReference type="GO" id="GO:0043065">
    <property type="term" value="P:positive regulation of apoptotic process"/>
    <property type="evidence" value="ECO:0007669"/>
    <property type="project" value="Ensembl"/>
</dbReference>
<dbReference type="GO" id="GO:0046777">
    <property type="term" value="P:protein autophosphorylation"/>
    <property type="evidence" value="ECO:0000314"/>
    <property type="project" value="UniProtKB"/>
</dbReference>
<dbReference type="GO" id="GO:0006468">
    <property type="term" value="P:protein phosphorylation"/>
    <property type="evidence" value="ECO:0000314"/>
    <property type="project" value="UniProtKB"/>
</dbReference>
<dbReference type="GO" id="GO:0007165">
    <property type="term" value="P:signal transduction"/>
    <property type="evidence" value="ECO:0000318"/>
    <property type="project" value="GO_Central"/>
</dbReference>
<dbReference type="CDD" id="cd12059">
    <property type="entry name" value="SH3_MLK1-3"/>
    <property type="match status" value="1"/>
</dbReference>
<dbReference type="CDD" id="cd14145">
    <property type="entry name" value="STKc_MLK1"/>
    <property type="match status" value="1"/>
</dbReference>
<dbReference type="DisProt" id="DP02571"/>
<dbReference type="FunFam" id="1.10.510.10:FF:000076">
    <property type="entry name" value="Mitogen-activated protein kinase kinase kinase"/>
    <property type="match status" value="1"/>
</dbReference>
<dbReference type="FunFam" id="2.30.30.40:FF:000079">
    <property type="entry name" value="Mitogen-activated protein kinase kinase kinase"/>
    <property type="match status" value="1"/>
</dbReference>
<dbReference type="FunFam" id="3.30.200.20:FF:000085">
    <property type="entry name" value="Mitogen-activated protein kinase kinase kinase"/>
    <property type="match status" value="1"/>
</dbReference>
<dbReference type="Gene3D" id="3.30.200.20">
    <property type="entry name" value="Phosphorylase Kinase, domain 1"/>
    <property type="match status" value="1"/>
</dbReference>
<dbReference type="Gene3D" id="2.30.30.40">
    <property type="entry name" value="SH3 Domains"/>
    <property type="match status" value="1"/>
</dbReference>
<dbReference type="Gene3D" id="1.10.510.10">
    <property type="entry name" value="Transferase(Phosphotransferase) domain 1"/>
    <property type="match status" value="1"/>
</dbReference>
<dbReference type="InterPro" id="IPR011009">
    <property type="entry name" value="Kinase-like_dom_sf"/>
</dbReference>
<dbReference type="InterPro" id="IPR035779">
    <property type="entry name" value="MLK1-3_SH3"/>
</dbReference>
<dbReference type="InterPro" id="IPR016231">
    <property type="entry name" value="MLK1-4"/>
</dbReference>
<dbReference type="InterPro" id="IPR000719">
    <property type="entry name" value="Prot_kinase_dom"/>
</dbReference>
<dbReference type="InterPro" id="IPR017441">
    <property type="entry name" value="Protein_kinase_ATP_BS"/>
</dbReference>
<dbReference type="InterPro" id="IPR001245">
    <property type="entry name" value="Ser-Thr/Tyr_kinase_cat_dom"/>
</dbReference>
<dbReference type="InterPro" id="IPR008271">
    <property type="entry name" value="Ser/Thr_kinase_AS"/>
</dbReference>
<dbReference type="InterPro" id="IPR051681">
    <property type="entry name" value="Ser/Thr_Kinases-Pseudokinases"/>
</dbReference>
<dbReference type="InterPro" id="IPR036028">
    <property type="entry name" value="SH3-like_dom_sf"/>
</dbReference>
<dbReference type="InterPro" id="IPR001452">
    <property type="entry name" value="SH3_domain"/>
</dbReference>
<dbReference type="PANTHER" id="PTHR44329:SF35">
    <property type="entry name" value="MITOGEN-ACTIVATED PROTEIN KINASE KINASE KINASE 9"/>
    <property type="match status" value="1"/>
</dbReference>
<dbReference type="PANTHER" id="PTHR44329">
    <property type="entry name" value="SERINE/THREONINE-PROTEIN KINASE TNNI3K-RELATED"/>
    <property type="match status" value="1"/>
</dbReference>
<dbReference type="Pfam" id="PF00069">
    <property type="entry name" value="Pkinase"/>
    <property type="match status" value="1"/>
</dbReference>
<dbReference type="Pfam" id="PF14604">
    <property type="entry name" value="SH3_9"/>
    <property type="match status" value="1"/>
</dbReference>
<dbReference type="PIRSF" id="PIRSF000556">
    <property type="entry name" value="MAPKKK9_11"/>
    <property type="match status" value="1"/>
</dbReference>
<dbReference type="PRINTS" id="PR00452">
    <property type="entry name" value="SH3DOMAIN"/>
</dbReference>
<dbReference type="PRINTS" id="PR00109">
    <property type="entry name" value="TYRKINASE"/>
</dbReference>
<dbReference type="SMART" id="SM00220">
    <property type="entry name" value="S_TKc"/>
    <property type="match status" value="1"/>
</dbReference>
<dbReference type="SMART" id="SM00326">
    <property type="entry name" value="SH3"/>
    <property type="match status" value="1"/>
</dbReference>
<dbReference type="SUPFAM" id="SSF56112">
    <property type="entry name" value="Protein kinase-like (PK-like)"/>
    <property type="match status" value="1"/>
</dbReference>
<dbReference type="SUPFAM" id="SSF50044">
    <property type="entry name" value="SH3-domain"/>
    <property type="match status" value="1"/>
</dbReference>
<dbReference type="PROSITE" id="PS00107">
    <property type="entry name" value="PROTEIN_KINASE_ATP"/>
    <property type="match status" value="1"/>
</dbReference>
<dbReference type="PROSITE" id="PS50011">
    <property type="entry name" value="PROTEIN_KINASE_DOM"/>
    <property type="match status" value="1"/>
</dbReference>
<dbReference type="PROSITE" id="PS00108">
    <property type="entry name" value="PROTEIN_KINASE_ST"/>
    <property type="match status" value="1"/>
</dbReference>
<dbReference type="PROSITE" id="PS50002">
    <property type="entry name" value="SH3"/>
    <property type="match status" value="1"/>
</dbReference>
<accession>P80192</accession>
<accession>A3KN85</accession>
<accession>Q0D2G7</accession>
<accession>Q6EH31</accession>
<accession>Q9H2N5</accession>
<reference key="1">
    <citation type="journal article" date="2004" name="Biochemistry">
        <title>Phosphoregulation of mixed-lineage kinase 1 activity by multiple phosphorylation in the activation loop.</title>
        <authorList>
            <person name="Durkin J.T."/>
            <person name="Holskin B.P."/>
            <person name="Kopec K.K."/>
            <person name="Reed M.S."/>
            <person name="Spais C.M."/>
            <person name="Steffy B.M."/>
            <person name="Gessner G."/>
            <person name="Angeles T.S."/>
            <person name="Pohl J."/>
            <person name="Ator M.A."/>
            <person name="Meyer S.L."/>
        </authorList>
    </citation>
    <scope>NUCLEOTIDE SEQUENCE [MRNA] (ISOFORM 1)</scope>
    <scope>FUNCTION</scope>
    <scope>ACTIVITY REGULATION</scope>
    <scope>PHOSPHORYLATION AT THR-304; THR-305; SER-308 AND THR-312</scope>
    <scope>MUTAGENESIS OF LYS-171; THR-304; THR-305; SER-308 AND THR-312</scope>
</reference>
<reference key="2">
    <citation type="journal article" date="2004" name="Genome Res.">
        <title>The status, quality, and expansion of the NIH full-length cDNA project: the Mammalian Gene Collection (MGC).</title>
        <authorList>
            <consortium name="The MGC Project Team"/>
        </authorList>
    </citation>
    <scope>NUCLEOTIDE SEQUENCE [LARGE SCALE MRNA] (ISOFORM 1)</scope>
</reference>
<reference key="3">
    <citation type="submission" date="2000-04" db="EMBL/GenBank/DDBJ databases">
        <title>cDNA sequence and gene organisation of mixed lineage kinase 1.</title>
        <authorList>
            <person name="McNee J.J."/>
            <person name="Dower S.K."/>
            <person name="Guesdon F."/>
        </authorList>
    </citation>
    <scope>NUCLEOTIDE SEQUENCE [MRNA] OF 53-1104 (ISOFORM 2)</scope>
</reference>
<reference key="4">
    <citation type="journal article" date="1993" name="Eur. J. Biochem.">
        <title>Identification of a new family of human epithelial protein kinases containing two leucine/isoleucine-zipper domains.</title>
        <authorList>
            <person name="Dorow D.S."/>
            <person name="Devereux L."/>
            <person name="Dietzsch E."/>
            <person name="de Kretser T."/>
        </authorList>
    </citation>
    <scope>NUCLEOTIDE SEQUENCE [MRNA] OF 142-535</scope>
    <scope>TISSUE SPECIFICITY</scope>
    <source>
        <tissue>Colon epithelium</tissue>
    </source>
</reference>
<reference key="5">
    <citation type="journal article" date="2001" name="J. Biol. Chem.">
        <title>Cep-1347 (KT7515), a semisynthetic inhibitor of the mixed lineage kinase family.</title>
        <authorList>
            <person name="Maroney A.C."/>
            <person name="Finn J.P."/>
            <person name="Connors T.J."/>
            <person name="Durkin J.T."/>
            <person name="Angeles T."/>
            <person name="Gessner G."/>
            <person name="Xu Z."/>
            <person name="Meyer S.L."/>
            <person name="Savage M.J."/>
            <person name="Greene L.A."/>
            <person name="Scott R.W."/>
            <person name="Vaught J.L."/>
        </authorList>
    </citation>
    <scope>ACTIVITY REGULATION</scope>
    <scope>BIOPHYSICOCHEMICAL PROPERTIES</scope>
    <scope>PHOSPHORYLATION OF MAP2K4/MKK4</scope>
</reference>
<reference key="6">
    <citation type="journal article" date="2001" name="Mol. Cell. Biol.">
        <title>The MLK family mediates c-Jun N-terminal kinase activation in neuronal apoptosis.</title>
        <authorList>
            <person name="Xu Z."/>
            <person name="Maroney A.C."/>
            <person name="Dobrzanski P."/>
            <person name="Kukekov N.V."/>
            <person name="Greene L.A."/>
        </authorList>
    </citation>
    <scope>FUNCTION IN THE APOPTOSIS PATHWAY</scope>
</reference>
<reference key="7">
    <citation type="journal article" date="2002" name="Bioorg. Med. Chem. Lett.">
        <title>Mixed lineage kinase activity of indolocarbazole analogues.</title>
        <authorList>
            <person name="Murakata C."/>
            <person name="Kaneko M."/>
            <person name="Gessner G."/>
            <person name="Angeles T.S."/>
            <person name="Ator M.A."/>
            <person name="O'Kane T.M."/>
            <person name="McKenna B.A."/>
            <person name="Thomas B.A."/>
            <person name="Mathiasen J.R."/>
            <person name="Saporito M.S."/>
            <person name="Bozyczko-Coyne D."/>
            <person name="Hudkins R.L."/>
        </authorList>
    </citation>
    <scope>ACTIVITY REGULATION</scope>
</reference>
<reference key="8">
    <citation type="journal article" date="2008" name="Int. J. Cancer">
        <title>Genomic profiling of 766 cancer-related genes in archived esophageal normal and carcinoma tissues.</title>
        <authorList>
            <person name="Chen J."/>
            <person name="Guo L."/>
            <person name="Peiffer D.A."/>
            <person name="Zhou L."/>
            <person name="Chan O.T."/>
            <person name="Bibikova M."/>
            <person name="Wickham-Garcia E."/>
            <person name="Lu S.H."/>
            <person name="Zhan Q."/>
            <person name="Wang-Rodriguez J."/>
            <person name="Jiang W."/>
            <person name="Fan J.B."/>
        </authorList>
    </citation>
    <scope>POSSIBLE ROLE IN ESOPHAGEAL CANCER</scope>
</reference>
<reference key="9">
    <citation type="journal article" date="2009" name="Mol. Cell. Proteomics">
        <title>Large-scale proteomics analysis of the human kinome.</title>
        <authorList>
            <person name="Oppermann F.S."/>
            <person name="Gnad F."/>
            <person name="Olsen J.V."/>
            <person name="Hornberger R."/>
            <person name="Greff Z."/>
            <person name="Keri G."/>
            <person name="Mann M."/>
            <person name="Daub H."/>
        </authorList>
    </citation>
    <scope>IDENTIFICATION BY MASS SPECTROMETRY [LARGE SCALE ANALYSIS]</scope>
</reference>
<reference key="10">
    <citation type="journal article" date="2013" name="J. Proteome Res.">
        <title>Toward a comprehensive characterization of a human cancer cell phosphoproteome.</title>
        <authorList>
            <person name="Zhou H."/>
            <person name="Di Palma S."/>
            <person name="Preisinger C."/>
            <person name="Peng M."/>
            <person name="Polat A.N."/>
            <person name="Heck A.J."/>
            <person name="Mohammed S."/>
        </authorList>
    </citation>
    <scope>PHOSPHORYLATION [LARGE SCALE ANALYSIS] AT SER-533</scope>
    <scope>IDENTIFICATION BY MASS SPECTROMETRY [LARGE SCALE ANALYSIS]</scope>
    <source>
        <tissue>Erythroleukemia</tissue>
    </source>
</reference>
<reference key="11">
    <citation type="journal article" date="2008" name="J. Med. Chem.">
        <title>Mixed-lineage kinase 1 and mixed-lineage kinase 3 subtype-selective dihydronaphthyl[3,4-a]pyrrolo[3,4-c]carbazole-5-ones: optimization, mixed-lineage kinase 1 crystallography, and oral in vivo activity in 1-methyl-4-phenyltetrahydropyridine models.</title>
        <authorList>
            <person name="Hudkins R.L."/>
            <person name="Diebold J.L."/>
            <person name="Tao M."/>
            <person name="Josef K.A."/>
            <person name="Park C.H."/>
            <person name="Angeles T.S."/>
            <person name="Aimone L.D."/>
            <person name="Husten J."/>
            <person name="Ator M.A."/>
            <person name="Meyer S.L."/>
            <person name="Holskin B.P."/>
            <person name="Durkin J.T."/>
            <person name="Fedorov A.A."/>
            <person name="Fedorov E.V."/>
            <person name="Almo S.C."/>
            <person name="Mathiasen J.R."/>
            <person name="Bozyczko-Coyne D."/>
            <person name="Saporito M.S."/>
            <person name="Scott R.W."/>
            <person name="Mallamo J.P."/>
        </authorList>
    </citation>
    <scope>X-RAY CRYSTALLOGRAPHY (2.6 ANGSTROMS) OF 136-406</scope>
</reference>
<reference key="12">
    <citation type="journal article" date="2007" name="Nature">
        <title>Patterns of somatic mutation in human cancer genomes.</title>
        <authorList>
            <person name="Greenman C."/>
            <person name="Stephens P."/>
            <person name="Smith R."/>
            <person name="Dalgliesh G.L."/>
            <person name="Hunter C."/>
            <person name="Bignell G."/>
            <person name="Davies H."/>
            <person name="Teague J."/>
            <person name="Butler A."/>
            <person name="Stevens C."/>
            <person name="Edkins S."/>
            <person name="O'Meara S."/>
            <person name="Vastrik I."/>
            <person name="Schmidt E.E."/>
            <person name="Avis T."/>
            <person name="Barthorpe S."/>
            <person name="Bhamra G."/>
            <person name="Buck G."/>
            <person name="Choudhury B."/>
            <person name="Clements J."/>
            <person name="Cole J."/>
            <person name="Dicks E."/>
            <person name="Forbes S."/>
            <person name="Gray K."/>
            <person name="Halliday K."/>
            <person name="Harrison R."/>
            <person name="Hills K."/>
            <person name="Hinton J."/>
            <person name="Jenkinson A."/>
            <person name="Jones D."/>
            <person name="Menzies A."/>
            <person name="Mironenko T."/>
            <person name="Perry J."/>
            <person name="Raine K."/>
            <person name="Richardson D."/>
            <person name="Shepherd R."/>
            <person name="Small A."/>
            <person name="Tofts C."/>
            <person name="Varian J."/>
            <person name="Webb T."/>
            <person name="West S."/>
            <person name="Widaa S."/>
            <person name="Yates A."/>
            <person name="Cahill D.P."/>
            <person name="Louis D.N."/>
            <person name="Goldstraw P."/>
            <person name="Nicholson A.G."/>
            <person name="Brasseur F."/>
            <person name="Looijenga L."/>
            <person name="Weber B.L."/>
            <person name="Chiew Y.-E."/>
            <person name="DeFazio A."/>
            <person name="Greaves M.F."/>
            <person name="Green A.R."/>
            <person name="Campbell P."/>
            <person name="Birney E."/>
            <person name="Easton D.F."/>
            <person name="Chenevix-Trench G."/>
            <person name="Tan M.-H."/>
            <person name="Khoo S.K."/>
            <person name="Teh B.T."/>
            <person name="Yuen S.T."/>
            <person name="Leung S.Y."/>
            <person name="Wooster R."/>
            <person name="Futreal P.A."/>
            <person name="Stratton M.R."/>
        </authorList>
    </citation>
    <scope>VARIANTS [LARGE SCALE ANALYSIS] VAL-246; CYS-467; GLN-497 AND CYS-646</scope>
</reference>
<feature type="chain" id="PRO_0000086258" description="Mitogen-activated protein kinase kinase kinase 9">
    <location>
        <begin position="1"/>
        <end position="1104"/>
    </location>
</feature>
<feature type="domain" description="SH3" evidence="3">
    <location>
        <begin position="52"/>
        <end position="116"/>
    </location>
</feature>
<feature type="domain" description="Protein kinase" evidence="2">
    <location>
        <begin position="144"/>
        <end position="412"/>
    </location>
</feature>
<feature type="region of interest" description="Disordered" evidence="5">
    <location>
        <begin position="12"/>
        <end position="47"/>
    </location>
</feature>
<feature type="region of interest" description="Leucine-zipper 1">
    <location>
        <begin position="430"/>
        <end position="451"/>
    </location>
</feature>
<feature type="region of interest" description="Leucine-zipper 2">
    <location>
        <begin position="465"/>
        <end position="486"/>
    </location>
</feature>
<feature type="region of interest" description="Disordered" evidence="5">
    <location>
        <begin position="532"/>
        <end position="636"/>
    </location>
</feature>
<feature type="region of interest" description="Disordered" evidence="5">
    <location>
        <begin position="675"/>
        <end position="742"/>
    </location>
</feature>
<feature type="region of interest" description="Disordered" evidence="5">
    <location>
        <begin position="781"/>
        <end position="819"/>
    </location>
</feature>
<feature type="region of interest" description="Disordered" evidence="5">
    <location>
        <begin position="890"/>
        <end position="1038"/>
    </location>
</feature>
<feature type="compositionally biased region" description="Low complexity" evidence="5">
    <location>
        <begin position="12"/>
        <end position="22"/>
    </location>
</feature>
<feature type="compositionally biased region" description="Acidic residues" evidence="5">
    <location>
        <begin position="29"/>
        <end position="39"/>
    </location>
</feature>
<feature type="compositionally biased region" description="Polar residues" evidence="5">
    <location>
        <begin position="566"/>
        <end position="575"/>
    </location>
</feature>
<feature type="compositionally biased region" description="Polar residues" evidence="5">
    <location>
        <begin position="723"/>
        <end position="739"/>
    </location>
</feature>
<feature type="compositionally biased region" description="Basic and acidic residues" evidence="5">
    <location>
        <begin position="785"/>
        <end position="797"/>
    </location>
</feature>
<feature type="compositionally biased region" description="Polar residues" evidence="5">
    <location>
        <begin position="893"/>
        <end position="910"/>
    </location>
</feature>
<feature type="compositionally biased region" description="Low complexity" evidence="5">
    <location>
        <begin position="929"/>
        <end position="944"/>
    </location>
</feature>
<feature type="compositionally biased region" description="Polar residues" evidence="5">
    <location>
        <begin position="1014"/>
        <end position="1038"/>
    </location>
</feature>
<feature type="active site" description="Proton acceptor" evidence="2 4">
    <location>
        <position position="268"/>
    </location>
</feature>
<feature type="binding site" evidence="2">
    <location>
        <begin position="150"/>
        <end position="158"/>
    </location>
    <ligand>
        <name>ATP</name>
        <dbReference type="ChEBI" id="CHEBI:30616"/>
    </ligand>
</feature>
<feature type="binding site">
    <location>
        <position position="171"/>
    </location>
    <ligand>
        <name>ATP</name>
        <dbReference type="ChEBI" id="CHEBI:30616"/>
    </ligand>
</feature>
<feature type="modified residue" description="Phosphothreonine; by autocatalysis" evidence="9">
    <location>
        <position position="304"/>
    </location>
</feature>
<feature type="modified residue" description="Phosphothreonine; by autocatalysis" evidence="9">
    <location>
        <position position="305"/>
    </location>
</feature>
<feature type="modified residue" description="Phosphoserine; by autocatalysis" evidence="9">
    <location>
        <position position="308"/>
    </location>
</feature>
<feature type="modified residue" description="Phosphothreonine; by autocatalysis" evidence="9">
    <location>
        <position position="312"/>
    </location>
</feature>
<feature type="modified residue" description="Phosphoserine" evidence="14">
    <location>
        <position position="533"/>
    </location>
</feature>
<feature type="splice variant" id="VSP_013765" description="In isoform 2." evidence="12">
    <original>M</original>
    <variation>MALLAASWVVPIDIE</variation>
    <location>
        <position position="675"/>
    </location>
</feature>
<feature type="sequence variant" id="VAR_040698" description="In a metastatic melanoma sample; somatic mutation." evidence="10">
    <original>A</original>
    <variation>V</variation>
    <location>
        <position position="246"/>
    </location>
</feature>
<feature type="sequence variant" id="VAR_040699" description="In a gastric adenocarcinoma sample; somatic mutation; dbSNP:rs773256562." evidence="10">
    <original>R</original>
    <variation>C</variation>
    <location>
        <position position="467"/>
    </location>
</feature>
<feature type="sequence variant" id="VAR_040700" description="In dbSNP:rs56196343." evidence="10">
    <original>R</original>
    <variation>Q</variation>
    <location>
        <position position="497"/>
    </location>
</feature>
<feature type="sequence variant" id="VAR_040701" description="In dbSNP:rs34322726." evidence="10">
    <original>Y</original>
    <variation>C</variation>
    <location>
        <position position="646"/>
    </location>
</feature>
<feature type="mutagenesis site" description="Loss of kinase activity and threonine phosphorylation." evidence="9">
    <original>K</original>
    <variation>A</variation>
    <location>
        <position position="171"/>
    </location>
</feature>
<feature type="mutagenesis site" description="Reduces threonine phosphorylation. Impairs JNK activation." evidence="9">
    <original>T</original>
    <variation>A</variation>
    <location>
        <position position="304"/>
    </location>
</feature>
<feature type="mutagenesis site" description="Little effect on threonine phosphorylation. Mildly impairs JNK activation." evidence="9">
    <original>T</original>
    <variation>A</variation>
    <location>
        <position position="305"/>
    </location>
</feature>
<feature type="mutagenesis site" description="Impairs JNK activation." evidence="9">
    <original>S</original>
    <variation>A</variation>
    <location>
        <position position="308"/>
    </location>
</feature>
<feature type="mutagenesis site" description="Loss of threonine phosphorylation. Strongly impairs JNK activation." evidence="9">
    <original>T</original>
    <variation>A</variation>
    <location>
        <position position="312"/>
    </location>
</feature>
<feature type="sequence conflict" description="In Ref. 4." evidence="13" ref="4">
    <original>A</original>
    <variation>R</variation>
    <location>
        <position position="356"/>
    </location>
</feature>
<feature type="sequence conflict" description="In Ref. 1; AAQ23054." evidence="13" ref="1">
    <original>M</original>
    <variation>T</variation>
    <location>
        <position position="433"/>
    </location>
</feature>
<feature type="sequence conflict" description="In Ref. 4." evidence="13" ref="4">
    <original>KLKDGNRISLPSDFQHKFTVQASPT</original>
    <variation>AQPVLPFPHGHSRCPGGTGSSWGGQ</variation>
    <location>
        <begin position="511"/>
        <end position="535"/>
    </location>
</feature>
<feature type="strand" evidence="15">
    <location>
        <begin position="143"/>
        <end position="153"/>
    </location>
</feature>
<feature type="strand" evidence="15">
    <location>
        <begin position="156"/>
        <end position="163"/>
    </location>
</feature>
<feature type="strand" evidence="15">
    <location>
        <begin position="166"/>
        <end position="172"/>
    </location>
</feature>
<feature type="helix" evidence="15">
    <location>
        <begin position="185"/>
        <end position="197"/>
    </location>
</feature>
<feature type="strand" evidence="15">
    <location>
        <begin position="206"/>
        <end position="210"/>
    </location>
</feature>
<feature type="strand" evidence="15">
    <location>
        <begin position="217"/>
        <end position="221"/>
    </location>
</feature>
<feature type="helix" evidence="15">
    <location>
        <begin position="228"/>
        <end position="232"/>
    </location>
</feature>
<feature type="helix" evidence="15">
    <location>
        <begin position="239"/>
        <end position="258"/>
    </location>
</feature>
<feature type="strand" evidence="15">
    <location>
        <begin position="259"/>
        <end position="262"/>
    </location>
</feature>
<feature type="helix" evidence="15">
    <location>
        <begin position="271"/>
        <end position="273"/>
    </location>
</feature>
<feature type="strand" evidence="15">
    <location>
        <begin position="274"/>
        <end position="278"/>
    </location>
</feature>
<feature type="strand" evidence="15">
    <location>
        <begin position="281"/>
        <end position="283"/>
    </location>
</feature>
<feature type="strand" evidence="15">
    <location>
        <begin position="290"/>
        <end position="292"/>
    </location>
</feature>
<feature type="helix" evidence="16">
    <location>
        <begin position="299"/>
        <end position="301"/>
    </location>
</feature>
<feature type="helix" evidence="15">
    <location>
        <begin position="313"/>
        <end position="315"/>
    </location>
</feature>
<feature type="helix" evidence="15">
    <location>
        <begin position="318"/>
        <end position="323"/>
    </location>
</feature>
<feature type="helix" evidence="15">
    <location>
        <begin position="328"/>
        <end position="344"/>
    </location>
</feature>
<feature type="turn" evidence="15">
    <location>
        <begin position="348"/>
        <end position="351"/>
    </location>
</feature>
<feature type="helix" evidence="15">
    <location>
        <begin position="354"/>
        <end position="362"/>
    </location>
</feature>
<feature type="helix" evidence="15">
    <location>
        <begin position="376"/>
        <end position="385"/>
    </location>
</feature>
<feature type="helix" evidence="15">
    <location>
        <begin position="390"/>
        <end position="392"/>
    </location>
</feature>
<feature type="helix" evidence="15">
    <location>
        <begin position="396"/>
        <end position="404"/>
    </location>
</feature>
<feature type="helix" evidence="16">
    <location>
        <begin position="410"/>
        <end position="412"/>
    </location>
</feature>
<feature type="helix" evidence="16">
    <location>
        <begin position="418"/>
        <end position="439"/>
    </location>
</feature>
<feature type="helix" evidence="16">
    <location>
        <begin position="441"/>
        <end position="444"/>
    </location>
</feature>
<sequence>MEPSRALLGCLASAAAAAPPGEDGAGAGAEEEEEEEEEAAAAVGPGELGCDAPLPYWTAVFEYEAAGEDELTLRLGDVVEVLSKDSQVSGDEGWWTGQLNQRVGIFPSNYVTPRSAFSSRCQPGGEDPSCYPPIQLLEIDFAELTLEEIIGIGGFGKVYRAFWIGDEVAVKAARHDPDEDISQTIENVRQEAKLFAMLKHPNIIALRGVCLKEPNLCLVMEFARGGPLNRVLSGKRIPPDILVNWAVQIARGMNYLHDEAIVPIIHRDLKSSNILILQKVENGDLSNKILKITDFGLAREWHRTTKMSAAGTYAWMAPEVIRASMFSKGSDVWSYGVLLWELLTGEVPFRGIDGLAVAYGVAMNKLALPIPSTCPEPFAKLMEDCWNPDPHSRPSFTNILDQLTTIEESGFFEMPKDSFHCLQDNWKHEIQEMFDQLRAKEKELRTWEEELTRAALQQKNQEELLRRREQELAEREIDILERELNIIIHQLCQEKPRVKKRKGKFRKSRLKLKDGNRISLPSDFQHKFTVQASPTMDKRKSLINSRSSPPASPTIIPRLRAIQLTPGESSKTWGRSSVVPKEEGEEEEKRAPKKKGRTWGPGTLGQKELASGDEGSPQRREKANGLSTPSESPHFHLGLKSLVDGYKQWSSSAPNLVKGPRSSPALPGFTSLMEMEDEDSEGPGSGESRLQHSPSQSYLCIPFPRGEDGDGPSSDGIHEEPTPVNSATSTPQLTPTNSLKRGGAHHRRCEVALLGCGAVLAATGLGFDLLEAGKCQLLPLEEPEPPAREEKKRREGLFQRSSRPRRSTSPPSRKLFKKEEPMLLLGDPSASLTLLSLSSISECNSTRSLLRSDSDEIVVYEMPVSPVEAPPLSPCTHNPLVNVRVERFKRDPNQSLTPTHVTLTTPSQPSSHRRTPSDGALKPETLLASRSPSSNGLSPSPGAGMLKTPSPSRDPGEFPRLPDPNVVFPPTPRRWNTQQDSTLERPKTLEFLPRPRPSANRQRLDPWWFVSPSHARSTSPANSSSTETPSNLDSCFASSSSTVEERPGLPALLPFQAGPLPPTERTLLDLDAEGQSQDSTVPLCRAELNTHRPAPYEIQQEFWS</sequence>
<proteinExistence type="evidence at protein level"/>
<evidence type="ECO:0000250" key="1"/>
<evidence type="ECO:0000255" key="2">
    <source>
        <dbReference type="PROSITE-ProRule" id="PRU00159"/>
    </source>
</evidence>
<evidence type="ECO:0000255" key="3">
    <source>
        <dbReference type="PROSITE-ProRule" id="PRU00192"/>
    </source>
</evidence>
<evidence type="ECO:0000255" key="4">
    <source>
        <dbReference type="PROSITE-ProRule" id="PRU10027"/>
    </source>
</evidence>
<evidence type="ECO:0000256" key="5">
    <source>
        <dbReference type="SAM" id="MobiDB-lite"/>
    </source>
</evidence>
<evidence type="ECO:0000269" key="6">
    <source>
    </source>
</evidence>
<evidence type="ECO:0000269" key="7">
    <source>
    </source>
</evidence>
<evidence type="ECO:0000269" key="8">
    <source>
    </source>
</evidence>
<evidence type="ECO:0000269" key="9">
    <source>
    </source>
</evidence>
<evidence type="ECO:0000269" key="10">
    <source>
    </source>
</evidence>
<evidence type="ECO:0000269" key="11">
    <source>
    </source>
</evidence>
<evidence type="ECO:0000303" key="12">
    <source ref="3"/>
</evidence>
<evidence type="ECO:0000305" key="13"/>
<evidence type="ECO:0007744" key="14">
    <source>
    </source>
</evidence>
<evidence type="ECO:0007829" key="15">
    <source>
        <dbReference type="PDB" id="3DTC"/>
    </source>
</evidence>
<evidence type="ECO:0007829" key="16">
    <source>
        <dbReference type="PDB" id="4UY9"/>
    </source>
</evidence>
<comment type="function">
    <text evidence="7 9">Serine/threonine kinase which acts as an essential component of the MAP kinase signal transduction pathway. Plays an important role in the cascades of cellular responses evoked by changes in the environment. Once activated, acts as an upstream activator of the MKK/JNK signal transduction cascade through the phosphorylation of MAP2K4/MKK4 and MAP2K7/MKK7 which in turn activate the JNKs. The MKK/JNK signaling pathway regulates stress response via activator protein-1 (JUN) and GATA4 transcription factors. Also plays a role in mitochondrial death signaling pathway, including the release cytochrome c, leading to apoptosis.</text>
</comment>
<comment type="catalytic activity">
    <reaction>
        <text>L-seryl-[protein] + ATP = O-phospho-L-seryl-[protein] + ADP + H(+)</text>
        <dbReference type="Rhea" id="RHEA:17989"/>
        <dbReference type="Rhea" id="RHEA-COMP:9863"/>
        <dbReference type="Rhea" id="RHEA-COMP:11604"/>
        <dbReference type="ChEBI" id="CHEBI:15378"/>
        <dbReference type="ChEBI" id="CHEBI:29999"/>
        <dbReference type="ChEBI" id="CHEBI:30616"/>
        <dbReference type="ChEBI" id="CHEBI:83421"/>
        <dbReference type="ChEBI" id="CHEBI:456216"/>
        <dbReference type="EC" id="2.7.11.25"/>
    </reaction>
</comment>
<comment type="catalytic activity">
    <reaction>
        <text>L-threonyl-[protein] + ATP = O-phospho-L-threonyl-[protein] + ADP + H(+)</text>
        <dbReference type="Rhea" id="RHEA:46608"/>
        <dbReference type="Rhea" id="RHEA-COMP:11060"/>
        <dbReference type="Rhea" id="RHEA-COMP:11605"/>
        <dbReference type="ChEBI" id="CHEBI:15378"/>
        <dbReference type="ChEBI" id="CHEBI:30013"/>
        <dbReference type="ChEBI" id="CHEBI:30616"/>
        <dbReference type="ChEBI" id="CHEBI:61977"/>
        <dbReference type="ChEBI" id="CHEBI:456216"/>
        <dbReference type="EC" id="2.7.11.25"/>
    </reaction>
</comment>
<comment type="cofactor">
    <cofactor>
        <name>Mg(2+)</name>
        <dbReference type="ChEBI" id="CHEBI:18420"/>
    </cofactor>
</comment>
<comment type="activity regulation">
    <text evidence="6 8 9">Homodimerization via the leucine zipper domains is required for autophosphorylation of multiple sites in the activation loop and subsequent activation. Autophosphorylation at Thr-312 is the key step in activation of MAP3K9/MLK1 and is required for full phosphorylation. Autophosphorylation at Thr-304 and Ser-308 have been shown to be of secondary importance in the activation of MAP3K9/MLK1. CEP-1347 and many indolocarbazole analogs have been shown to act as inhibitors of MAP3K9/MLK1 activity.</text>
</comment>
<comment type="biophysicochemical properties">
    <kinetics>
        <KM evidence="6">62 uM for ATP</KM>
        <KM evidence="6">7 uM for myelin basic protein (MBP) as substrate</KM>
    </kinetics>
</comment>
<comment type="subunit">
    <text evidence="1">Homodimer.</text>
</comment>
<comment type="interaction">
    <interactant intactId="EBI-3951604">
        <id>P80192</id>
    </interactant>
    <interactant intactId="EBI-352572">
        <id>P08238</id>
        <label>HSP90AB1</label>
    </interactant>
    <organismsDiffer>false</organismsDiffer>
    <experiments>2</experiments>
</comment>
<comment type="interaction">
    <interactant intactId="EBI-3951604">
        <id>P80192</id>
    </interactant>
    <interactant intactId="EBI-399080">
        <id>Q92993</id>
        <label>KAT5</label>
    </interactant>
    <organismsDiffer>false</organismsDiffer>
    <experiments>3</experiments>
</comment>
<comment type="interaction">
    <interactant intactId="EBI-3951604">
        <id>P80192</id>
    </interactant>
    <interactant intactId="EBI-11742507">
        <id>Q8TAP4-4</id>
        <label>LMO3</label>
    </interactant>
    <organismsDiffer>false</organismsDiffer>
    <experiments>3</experiments>
</comment>
<comment type="interaction">
    <interactant intactId="EBI-3951604">
        <id>P80192</id>
    </interactant>
    <interactant intactId="EBI-1383528">
        <id>P17252</id>
        <label>PRKCA</label>
    </interactant>
    <organismsDiffer>false</organismsDiffer>
    <experiments>3</experiments>
</comment>
<comment type="interaction">
    <interactant intactId="EBI-3951604">
        <id>P80192</id>
    </interactant>
    <interactant intactId="EBI-9090795">
        <id>Q15047-2</id>
        <label>SETDB1</label>
    </interactant>
    <organismsDiffer>false</organismsDiffer>
    <experiments>3</experiments>
</comment>
<comment type="interaction">
    <interactant intactId="EBI-3951604">
        <id>P80192</id>
    </interactant>
    <interactant intactId="EBI-356498">
        <id>P62258</id>
        <label>YWHAE</label>
    </interactant>
    <organismsDiffer>false</organismsDiffer>
    <experiments>3</experiments>
</comment>
<comment type="interaction">
    <interactant intactId="EBI-3951604">
        <id>P80192</id>
    </interactant>
    <interactant intactId="EBI-359832">
        <id>P61981</id>
        <label>YWHAG</label>
    </interactant>
    <organismsDiffer>false</organismsDiffer>
    <experiments>4</experiments>
</comment>
<comment type="alternative products">
    <event type="alternative splicing"/>
    <isoform>
        <id>P80192-1</id>
        <name>1</name>
        <sequence type="displayed"/>
    </isoform>
    <isoform>
        <id>P80192-4</id>
        <name>2</name>
        <sequence type="described" ref="VSP_013765"/>
    </isoform>
</comment>
<comment type="tissue specificity">
    <text evidence="11">Expressed in epithelial tumor cell lines of colonic, breast and esophageal origin.</text>
</comment>
<comment type="PTM">
    <text evidence="6 9">Autophosphorylation on serine and threonine residues within the activation loop plays a role in enzyme activation. Thr-312 is likely to be the main autophosphorylation site. Autophosphorylation also occurs on Thr-304 and Ser-308.</text>
</comment>
<comment type="disease">
    <text>May play a role in esophageal cancer susceptibility and/or development.</text>
</comment>
<comment type="similarity">
    <text evidence="13">Belongs to the protein kinase superfamily. STE Ser/Thr protein kinase family. MAP kinase kinase kinase subfamily.</text>
</comment>
<comment type="sequence caution" evidence="13">
    <conflict type="erroneous initiation">
        <sequence resource="EMBL-CDS" id="AAI11408"/>
    </conflict>
    <text>Truncated N-terminus.</text>
</comment>